<comment type="function">
    <text evidence="1">Binds to the sigma-S subunit of RNA polymerase, activating expression of sigma-S-regulated genes. Stimulates RNA polymerase holoenzyme formation and may bind to several other sigma factors, such as sigma-70 and sigma-32.</text>
</comment>
<comment type="subcellular location">
    <subcellularLocation>
        <location evidence="1">Cytoplasm</location>
    </subcellularLocation>
</comment>
<comment type="similarity">
    <text evidence="1">Belongs to the Crl family.</text>
</comment>
<gene>
    <name evidence="1" type="primary">crl</name>
    <name type="ordered locus">EcHS_A0267</name>
</gene>
<organism>
    <name type="scientific">Escherichia coli O9:H4 (strain HS)</name>
    <dbReference type="NCBI Taxonomy" id="331112"/>
    <lineage>
        <taxon>Bacteria</taxon>
        <taxon>Pseudomonadati</taxon>
        <taxon>Pseudomonadota</taxon>
        <taxon>Gammaproteobacteria</taxon>
        <taxon>Enterobacterales</taxon>
        <taxon>Enterobacteriaceae</taxon>
        <taxon>Escherichia</taxon>
    </lineage>
</organism>
<reference key="1">
    <citation type="journal article" date="2008" name="J. Bacteriol.">
        <title>The pangenome structure of Escherichia coli: comparative genomic analysis of E. coli commensal and pathogenic isolates.</title>
        <authorList>
            <person name="Rasko D.A."/>
            <person name="Rosovitz M.J."/>
            <person name="Myers G.S.A."/>
            <person name="Mongodin E.F."/>
            <person name="Fricke W.F."/>
            <person name="Gajer P."/>
            <person name="Crabtree J."/>
            <person name="Sebaihia M."/>
            <person name="Thomson N.R."/>
            <person name="Chaudhuri R."/>
            <person name="Henderson I.R."/>
            <person name="Sperandio V."/>
            <person name="Ravel J."/>
        </authorList>
    </citation>
    <scope>NUCLEOTIDE SEQUENCE [LARGE SCALE GENOMIC DNA]</scope>
    <source>
        <strain>HS</strain>
    </source>
</reference>
<evidence type="ECO:0000255" key="1">
    <source>
        <dbReference type="HAMAP-Rule" id="MF_01178"/>
    </source>
</evidence>
<feature type="chain" id="PRO_1000065785" description="Sigma factor-binding protein Crl">
    <location>
        <begin position="1"/>
        <end position="133"/>
    </location>
</feature>
<feature type="region of interest" description="Essential for activity" evidence="1">
    <location>
        <begin position="99"/>
        <end position="122"/>
    </location>
</feature>
<feature type="coiled-coil region" evidence="1">
    <location>
        <begin position="90"/>
        <end position="116"/>
    </location>
</feature>
<name>CRL_ECOHS</name>
<proteinExistence type="inferred from homology"/>
<protein>
    <recommendedName>
        <fullName evidence="1">Sigma factor-binding protein Crl</fullName>
    </recommendedName>
</protein>
<accession>A7ZWK3</accession>
<sequence length="133" mass="15656">MTLPSGHPKSRLIKKFTALGPYIREGKCEDNRFFFDCLAVCVNVKPAPEVREFWGWWMELEAQESRFTYSYQFGLFDKAGDWKSVPVKDTEVVERLEHTLREFHEKLRELLTTLNLKLEPADDFRDEPVKLTA</sequence>
<keyword id="KW-0010">Activator</keyword>
<keyword id="KW-0175">Coiled coil</keyword>
<keyword id="KW-0963">Cytoplasm</keyword>
<keyword id="KW-0804">Transcription</keyword>
<keyword id="KW-0805">Transcription regulation</keyword>
<dbReference type="EMBL" id="CP000802">
    <property type="protein sequence ID" value="ABV04657.1"/>
    <property type="molecule type" value="Genomic_DNA"/>
</dbReference>
<dbReference type="RefSeq" id="WP_000174677.1">
    <property type="nucleotide sequence ID" value="NC_009800.1"/>
</dbReference>
<dbReference type="SMR" id="A7ZWK3"/>
<dbReference type="GeneID" id="93777153"/>
<dbReference type="KEGG" id="ecx:EcHS_A0267"/>
<dbReference type="HOGENOM" id="CLU_136773_0_0_6"/>
<dbReference type="GO" id="GO:0005737">
    <property type="term" value="C:cytoplasm"/>
    <property type="evidence" value="ECO:0007669"/>
    <property type="project" value="UniProtKB-SubCell"/>
</dbReference>
<dbReference type="GO" id="GO:0045893">
    <property type="term" value="P:positive regulation of DNA-templated transcription"/>
    <property type="evidence" value="ECO:0007669"/>
    <property type="project" value="UniProtKB-UniRule"/>
</dbReference>
<dbReference type="FunFam" id="3.30.310.230:FF:000001">
    <property type="entry name" value="Sigma factor-binding protein Crl"/>
    <property type="match status" value="1"/>
</dbReference>
<dbReference type="Gene3D" id="3.30.310.230">
    <property type="entry name" value="Sigma factor-binding protein Crl monomer"/>
    <property type="match status" value="1"/>
</dbReference>
<dbReference type="HAMAP" id="MF_01178">
    <property type="entry name" value="Crl"/>
    <property type="match status" value="1"/>
</dbReference>
<dbReference type="InterPro" id="IPR009986">
    <property type="entry name" value="Tscrpt_reg_Crl"/>
</dbReference>
<dbReference type="InterPro" id="IPR038208">
    <property type="entry name" value="Tscrpt_reg_Crl_sf"/>
</dbReference>
<dbReference type="NCBIfam" id="NF008217">
    <property type="entry name" value="PRK10984.1"/>
    <property type="match status" value="1"/>
</dbReference>
<dbReference type="Pfam" id="PF07417">
    <property type="entry name" value="Crl"/>
    <property type="match status" value="1"/>
</dbReference>